<accession>B9DVM1</accession>
<name>PEPX_STRU0</name>
<sequence length="758" mass="86360">MRYNQFSYIKTDGQVAKKELENLGFHFPISNKPKEIFRSFLNTYFFQSSDKDYQIASFIADFETDLLSFFNADKPLTKEIFDMVSLQLLGFIPGFDFENLKEFTSQIAFPVPFNENDLFASIHHLLGTRHKNGMLLIDDLISKGFLGPDNTYHFFNGKTLATFDTSQLIKEVVYVEAPIDSDNDGKSDLIKVMILRPRSQKQIPTVMTASPYHQGINEVANDKKLHSMQTDLPLKEAHKIHVADASISTLVCENADLPITENTEQFSYIDSYTLNDYFLSRGFANIYVSGVGTADSDGFMTSGDYVQIESFKAIIDWLNGRAKAFTSHKREAYVLANWSNGKVATTGKSYLGTMSNGLATTGVEGLEVIIAEAAISSWYDYYRENGLICSPGGYPGEDLDVLTELTYSRSLHAGDFLRQKEKYYQLLNQQSQAIDRDSGDYNQFWHDRNYLPNAKNVTCEVVFTHGLQDWNVKPRQVYNMFNALPGSVAKHLFLHHGQHVYMHNWQSIDFKECMNALLCQKLLGIASNFQLPAILWQNNQEEQKWQSLEEFGTSNTFRIPLGEGFAKISNQYSTETFERYSKDFKSFKRDLFSGKANQLSLEFPLDQDLQLNGEAILHLSLTSSVSKGLISAQLLDKGLKKRLGDTPTILDLKVMDNGQNFSREDLKELPMRESTERVISKGVLNLQNRDGLLEVQSVEADQWLSFDFKLQPSLYQLRKGDCLQVLLYTTDFEHTVRDNSDYELRINLEKSYLSLPIA</sequence>
<proteinExistence type="inferred from homology"/>
<gene>
    <name evidence="1" type="primary">pepX</name>
    <name type="ordered locus">SUB1574</name>
</gene>
<feature type="chain" id="PRO_1000192762" description="Xaa-Pro dipeptidyl-peptidase">
    <location>
        <begin position="1"/>
        <end position="758"/>
    </location>
</feature>
<feature type="active site" description="Charge relay system" evidence="1">
    <location>
        <position position="349"/>
    </location>
</feature>
<feature type="active site" description="Charge relay system" evidence="1">
    <location>
        <position position="469"/>
    </location>
</feature>
<feature type="active site" description="Charge relay system" evidence="1">
    <location>
        <position position="499"/>
    </location>
</feature>
<keyword id="KW-0031">Aminopeptidase</keyword>
<keyword id="KW-0963">Cytoplasm</keyword>
<keyword id="KW-0378">Hydrolase</keyword>
<keyword id="KW-0645">Protease</keyword>
<keyword id="KW-1185">Reference proteome</keyword>
<keyword id="KW-0720">Serine protease</keyword>
<reference key="1">
    <citation type="journal article" date="2009" name="BMC Genomics">
        <title>Evidence for niche adaptation in the genome of the bovine pathogen Streptococcus uberis.</title>
        <authorList>
            <person name="Ward P.N."/>
            <person name="Holden M.T.G."/>
            <person name="Leigh J.A."/>
            <person name="Lennard N."/>
            <person name="Bignell A."/>
            <person name="Barron A."/>
            <person name="Clark L."/>
            <person name="Quail M.A."/>
            <person name="Woodward J."/>
            <person name="Barrell B.G."/>
            <person name="Egan S.A."/>
            <person name="Field T.R."/>
            <person name="Maskell D."/>
            <person name="Kehoe M."/>
            <person name="Dowson C.G."/>
            <person name="Chanter N."/>
            <person name="Whatmore A.M."/>
            <person name="Bentley S.D."/>
            <person name="Parkhill J."/>
        </authorList>
    </citation>
    <scope>NUCLEOTIDE SEQUENCE [LARGE SCALE GENOMIC DNA]</scope>
    <source>
        <strain>ATCC BAA-854 / 0140J</strain>
    </source>
</reference>
<dbReference type="EC" id="3.4.14.11" evidence="1"/>
<dbReference type="EMBL" id="AM946015">
    <property type="protein sequence ID" value="CAR43372.1"/>
    <property type="molecule type" value="Genomic_DNA"/>
</dbReference>
<dbReference type="RefSeq" id="WP_015911880.1">
    <property type="nucleotide sequence ID" value="NC_012004.1"/>
</dbReference>
<dbReference type="SMR" id="B9DVM1"/>
<dbReference type="STRING" id="218495.SUB1574"/>
<dbReference type="ESTHER" id="stru0-pepx">
    <property type="family name" value="Lactobacillus_peptidase"/>
</dbReference>
<dbReference type="KEGG" id="sub:SUB1574"/>
<dbReference type="eggNOG" id="COG2936">
    <property type="taxonomic scope" value="Bacteria"/>
</dbReference>
<dbReference type="HOGENOM" id="CLU_011800_0_0_9"/>
<dbReference type="OrthoDB" id="319764at2"/>
<dbReference type="Proteomes" id="UP000000449">
    <property type="component" value="Chromosome"/>
</dbReference>
<dbReference type="GO" id="GO:0005737">
    <property type="term" value="C:cytoplasm"/>
    <property type="evidence" value="ECO:0007669"/>
    <property type="project" value="UniProtKB-SubCell"/>
</dbReference>
<dbReference type="GO" id="GO:0004177">
    <property type="term" value="F:aminopeptidase activity"/>
    <property type="evidence" value="ECO:0007669"/>
    <property type="project" value="UniProtKB-KW"/>
</dbReference>
<dbReference type="GO" id="GO:0008239">
    <property type="term" value="F:dipeptidyl-peptidase activity"/>
    <property type="evidence" value="ECO:0007669"/>
    <property type="project" value="UniProtKB-UniRule"/>
</dbReference>
<dbReference type="GO" id="GO:0008236">
    <property type="term" value="F:serine-type peptidase activity"/>
    <property type="evidence" value="ECO:0007669"/>
    <property type="project" value="UniProtKB-KW"/>
</dbReference>
<dbReference type="GO" id="GO:0006508">
    <property type="term" value="P:proteolysis"/>
    <property type="evidence" value="ECO:0007669"/>
    <property type="project" value="UniProtKB-KW"/>
</dbReference>
<dbReference type="Gene3D" id="1.10.246.70">
    <property type="match status" value="1"/>
</dbReference>
<dbReference type="Gene3D" id="3.40.50.1820">
    <property type="entry name" value="alpha/beta hydrolase"/>
    <property type="match status" value="1"/>
</dbReference>
<dbReference type="Gene3D" id="2.60.120.260">
    <property type="entry name" value="Galactose-binding domain-like"/>
    <property type="match status" value="1"/>
</dbReference>
<dbReference type="HAMAP" id="MF_00698">
    <property type="entry name" value="Aminopeptidase_S15"/>
    <property type="match status" value="1"/>
</dbReference>
<dbReference type="InterPro" id="IPR029058">
    <property type="entry name" value="AB_hydrolase_fold"/>
</dbReference>
<dbReference type="InterPro" id="IPR008979">
    <property type="entry name" value="Galactose-bd-like_sf"/>
</dbReference>
<dbReference type="InterPro" id="IPR008252">
    <property type="entry name" value="Pept_S15_Xpro"/>
</dbReference>
<dbReference type="InterPro" id="IPR015251">
    <property type="entry name" value="PepX_N_dom"/>
</dbReference>
<dbReference type="InterPro" id="IPR036313">
    <property type="entry name" value="PepX_N_dom_sf"/>
</dbReference>
<dbReference type="InterPro" id="IPR000383">
    <property type="entry name" value="Xaa-Pro-like_dom"/>
</dbReference>
<dbReference type="InterPro" id="IPR013736">
    <property type="entry name" value="Xaa-Pro_dipept_C"/>
</dbReference>
<dbReference type="InterPro" id="IPR050585">
    <property type="entry name" value="Xaa-Pro_dipeptidyl-ppase/CocE"/>
</dbReference>
<dbReference type="NCBIfam" id="NF003783">
    <property type="entry name" value="PRK05371.1-4"/>
    <property type="match status" value="1"/>
</dbReference>
<dbReference type="PANTHER" id="PTHR43056:SF10">
    <property type="entry name" value="COCE_NOND FAMILY, PUTATIVE (AFU_ORTHOLOGUE AFUA_7G00600)-RELATED"/>
    <property type="match status" value="1"/>
</dbReference>
<dbReference type="PANTHER" id="PTHR43056">
    <property type="entry name" value="PEPTIDASE S9 PROLYL OLIGOPEPTIDASE"/>
    <property type="match status" value="1"/>
</dbReference>
<dbReference type="Pfam" id="PF02129">
    <property type="entry name" value="Peptidase_S15"/>
    <property type="match status" value="1"/>
</dbReference>
<dbReference type="Pfam" id="PF08530">
    <property type="entry name" value="PepX_C"/>
    <property type="match status" value="1"/>
</dbReference>
<dbReference type="Pfam" id="PF09168">
    <property type="entry name" value="PepX_N"/>
    <property type="match status" value="1"/>
</dbReference>
<dbReference type="PRINTS" id="PR00923">
    <property type="entry name" value="LACTOPTASE"/>
</dbReference>
<dbReference type="SMART" id="SM00939">
    <property type="entry name" value="PepX_C"/>
    <property type="match status" value="1"/>
</dbReference>
<dbReference type="SMART" id="SM00940">
    <property type="entry name" value="PepX_N"/>
    <property type="match status" value="1"/>
</dbReference>
<dbReference type="SUPFAM" id="SSF53474">
    <property type="entry name" value="alpha/beta-Hydrolases"/>
    <property type="match status" value="1"/>
</dbReference>
<dbReference type="SUPFAM" id="SSF49785">
    <property type="entry name" value="Galactose-binding domain-like"/>
    <property type="match status" value="1"/>
</dbReference>
<dbReference type="SUPFAM" id="SSF81761">
    <property type="entry name" value="X-Prolyl dipeptidyl aminopeptidase PepX, N-terminal domain"/>
    <property type="match status" value="1"/>
</dbReference>
<evidence type="ECO:0000255" key="1">
    <source>
        <dbReference type="HAMAP-Rule" id="MF_00698"/>
    </source>
</evidence>
<organism>
    <name type="scientific">Streptococcus uberis (strain ATCC BAA-854 / 0140J)</name>
    <dbReference type="NCBI Taxonomy" id="218495"/>
    <lineage>
        <taxon>Bacteria</taxon>
        <taxon>Bacillati</taxon>
        <taxon>Bacillota</taxon>
        <taxon>Bacilli</taxon>
        <taxon>Lactobacillales</taxon>
        <taxon>Streptococcaceae</taxon>
        <taxon>Streptococcus</taxon>
    </lineage>
</organism>
<comment type="function">
    <text evidence="1">Removes N-terminal dipeptides sequentially from polypeptides having unsubstituted N-termini provided that the penultimate residue is proline.</text>
</comment>
<comment type="catalytic activity">
    <reaction evidence="1">
        <text>Hydrolyzes Xaa-Pro-|- bonds to release unblocked, N-terminal dipeptides from substrates including Ala-Pro-|-p-nitroanilide and (sequentially) Tyr-Pro-|-Phe-Pro-|-Gly-Pro-|-Ile.</text>
        <dbReference type="EC" id="3.4.14.11"/>
    </reaction>
</comment>
<comment type="subunit">
    <text evidence="1">Homodimer.</text>
</comment>
<comment type="subcellular location">
    <subcellularLocation>
        <location evidence="1">Cytoplasm</location>
    </subcellularLocation>
</comment>
<comment type="similarity">
    <text evidence="1">Belongs to the peptidase S15 family.</text>
</comment>
<protein>
    <recommendedName>
        <fullName evidence="1">Xaa-Pro dipeptidyl-peptidase</fullName>
        <ecNumber evidence="1">3.4.14.11</ecNumber>
    </recommendedName>
    <alternativeName>
        <fullName evidence="1">X-Pro dipeptidyl-peptidase</fullName>
    </alternativeName>
    <alternativeName>
        <fullName evidence="1">X-prolyl-dipeptidyl aminopeptidase</fullName>
        <shortName evidence="1">X-PDAP</shortName>
    </alternativeName>
</protein>